<feature type="initiator methionine" description="Removed" evidence="1">
    <location>
        <position position="1"/>
    </location>
</feature>
<feature type="chain" id="PRO_0000297729" description="Histone H2A.Z">
    <location>
        <begin position="2"/>
        <end position="132"/>
    </location>
</feature>
<feature type="region of interest" description="Disordered" evidence="2">
    <location>
        <begin position="1"/>
        <end position="30"/>
    </location>
</feature>
<feature type="compositionally biased region" description="Basic residues" evidence="2">
    <location>
        <begin position="1"/>
        <end position="11"/>
    </location>
</feature>
<feature type="compositionally biased region" description="Low complexity" evidence="2">
    <location>
        <begin position="15"/>
        <end position="26"/>
    </location>
</feature>
<feature type="modified residue" description="N-acetylserine" evidence="1">
    <location>
        <position position="2"/>
    </location>
</feature>
<feature type="modified residue" description="N6-acetyllysine" evidence="1">
    <location>
        <position position="4"/>
    </location>
</feature>
<feature type="modified residue" description="N6-acetyllysine" evidence="1">
    <location>
        <position position="11"/>
    </location>
</feature>
<feature type="modified residue" description="N6-acetyllysine" evidence="1">
    <location>
        <position position="13"/>
    </location>
</feature>
<dbReference type="EMBL" id="AAVQ01000002">
    <property type="protein sequence ID" value="EAZ63027.1"/>
    <property type="status" value="ALT_INIT"/>
    <property type="molecule type" value="Genomic_DNA"/>
</dbReference>
<dbReference type="RefSeq" id="XP_001387050.1">
    <property type="nucleotide sequence ID" value="XM_001387013.1"/>
</dbReference>
<dbReference type="SMR" id="A3GHC1"/>
<dbReference type="FunCoup" id="A3GHC1">
    <property type="interactions" value="1145"/>
</dbReference>
<dbReference type="STRING" id="322104.A3GHC1"/>
<dbReference type="GeneID" id="4851670"/>
<dbReference type="KEGG" id="pic:PICST_9318"/>
<dbReference type="eggNOG" id="KOG1757">
    <property type="taxonomic scope" value="Eukaryota"/>
</dbReference>
<dbReference type="HOGENOM" id="CLU_062828_2_1_1"/>
<dbReference type="InParanoid" id="A3GHC1"/>
<dbReference type="OrthoDB" id="9421954at2759"/>
<dbReference type="Proteomes" id="UP000002258">
    <property type="component" value="Chromosome 1"/>
</dbReference>
<dbReference type="GO" id="GO:0000786">
    <property type="term" value="C:nucleosome"/>
    <property type="evidence" value="ECO:0007669"/>
    <property type="project" value="UniProtKB-KW"/>
</dbReference>
<dbReference type="GO" id="GO:0005634">
    <property type="term" value="C:nucleus"/>
    <property type="evidence" value="ECO:0007669"/>
    <property type="project" value="UniProtKB-SubCell"/>
</dbReference>
<dbReference type="GO" id="GO:0003677">
    <property type="term" value="F:DNA binding"/>
    <property type="evidence" value="ECO:0007669"/>
    <property type="project" value="UniProtKB-KW"/>
</dbReference>
<dbReference type="GO" id="GO:0046982">
    <property type="term" value="F:protein heterodimerization activity"/>
    <property type="evidence" value="ECO:0007669"/>
    <property type="project" value="InterPro"/>
</dbReference>
<dbReference type="GO" id="GO:0030527">
    <property type="term" value="F:structural constituent of chromatin"/>
    <property type="evidence" value="ECO:0007669"/>
    <property type="project" value="InterPro"/>
</dbReference>
<dbReference type="CDD" id="cd00074">
    <property type="entry name" value="HFD_H2A"/>
    <property type="match status" value="1"/>
</dbReference>
<dbReference type="FunFam" id="1.10.20.10:FF:000021">
    <property type="entry name" value="Histone H2A"/>
    <property type="match status" value="1"/>
</dbReference>
<dbReference type="Gene3D" id="1.10.20.10">
    <property type="entry name" value="Histone, subunit A"/>
    <property type="match status" value="1"/>
</dbReference>
<dbReference type="InterPro" id="IPR009072">
    <property type="entry name" value="Histone-fold"/>
</dbReference>
<dbReference type="InterPro" id="IPR002119">
    <property type="entry name" value="Histone_H2A"/>
</dbReference>
<dbReference type="InterPro" id="IPR007125">
    <property type="entry name" value="Histone_H2A/H2B/H3"/>
</dbReference>
<dbReference type="InterPro" id="IPR032454">
    <property type="entry name" value="Histone_H2A_C"/>
</dbReference>
<dbReference type="InterPro" id="IPR032458">
    <property type="entry name" value="Histone_H2A_CS"/>
</dbReference>
<dbReference type="PANTHER" id="PTHR23430">
    <property type="entry name" value="HISTONE H2A"/>
    <property type="match status" value="1"/>
</dbReference>
<dbReference type="Pfam" id="PF00125">
    <property type="entry name" value="Histone"/>
    <property type="match status" value="1"/>
</dbReference>
<dbReference type="Pfam" id="PF16211">
    <property type="entry name" value="Histone_H2A_C"/>
    <property type="match status" value="1"/>
</dbReference>
<dbReference type="PRINTS" id="PR00620">
    <property type="entry name" value="HISTONEH2A"/>
</dbReference>
<dbReference type="SMART" id="SM00414">
    <property type="entry name" value="H2A"/>
    <property type="match status" value="1"/>
</dbReference>
<dbReference type="SUPFAM" id="SSF47113">
    <property type="entry name" value="Histone-fold"/>
    <property type="match status" value="1"/>
</dbReference>
<dbReference type="PROSITE" id="PS00046">
    <property type="entry name" value="HISTONE_H2A"/>
    <property type="match status" value="1"/>
</dbReference>
<keyword id="KW-0007">Acetylation</keyword>
<keyword id="KW-0158">Chromosome</keyword>
<keyword id="KW-0238">DNA-binding</keyword>
<keyword id="KW-0544">Nucleosome core</keyword>
<keyword id="KW-0539">Nucleus</keyword>
<keyword id="KW-1185">Reference proteome</keyword>
<proteinExistence type="inferred from homology"/>
<sequence length="132" mass="14342">MSGKGKVHGGKGKSSEAAKSSTSHSARAGLQFPVGRIKRYLKRTAQNKIRVGSKSAIYLTAVLEYLTAEVLELAGNAAKDLKVKRITPRHLQLAIRGDEELDNLIKATIAYGGVLPHINKALLLKVEKKKQK</sequence>
<comment type="function">
    <text evidence="1">Variant histone H2A which can replace H2A in some nucleosomes. Nucleosomes wrap and compact DNA into chromatin, limiting DNA accessibility to the cellular machineries which require DNA as a template. Histones thereby play a central role in transcription regulation, DNA repair, DNA replication and chromosomal stability. DNA accessibility is regulated via a complex set of post-translational modifications of histones, also called histone code, and nucleosome remodeling. This variant is enriched at promoters, it may keep them in a repressed state until the appropriate activation signal is received. Near telomeres, it may counteract gene silencing caused by the spread of heterochromatin proteins. Required for the RNA polymerase II and SPT15/TBP recruitment to the target genes. Involved in chromosome stability (By similarity).</text>
</comment>
<comment type="subunit">
    <text evidence="1">The nucleosome is a histone octamer containing two molecules each of H2A, H2B, H3 and H4 assembled in one H3-H4 heterotetramer and two H2A-H2B heterodimers. The octamer wraps approximately 147 bp of DNA. H2A or its variant H2A.Z forms a heterodimer with H2B. H2A.Z associates with the VPS72/SWC2 subunit of the SWR1 chromatin remodeling complex. Also interacts with RBP1/DNA-directed RNA polymerase II largest subunit (By similarity).</text>
</comment>
<comment type="subcellular location">
    <subcellularLocation>
        <location evidence="1">Nucleus</location>
    </subcellularLocation>
    <subcellularLocation>
        <location evidence="1">Chromosome</location>
    </subcellularLocation>
</comment>
<comment type="PTM">
    <text evidence="1">Acetylated once deposited into chromatin.</text>
</comment>
<comment type="similarity">
    <text evidence="3">Belongs to the histone H2A family.</text>
</comment>
<comment type="sequence caution" evidence="3">
    <conflict type="erroneous initiation">
        <sequence resource="EMBL-CDS" id="EAZ63027"/>
    </conflict>
</comment>
<evidence type="ECO:0000250" key="1"/>
<evidence type="ECO:0000256" key="2">
    <source>
        <dbReference type="SAM" id="MobiDB-lite"/>
    </source>
</evidence>
<evidence type="ECO:0000305" key="3"/>
<name>H2AZ_PICST</name>
<gene>
    <name type="primary">HTZ1</name>
    <name type="ORF">PICST_9318</name>
</gene>
<accession>A3GHC1</accession>
<organism>
    <name type="scientific">Scheffersomyces stipitis (strain ATCC 58785 / CBS 6054 / NBRC 10063 / NRRL Y-11545)</name>
    <name type="common">Yeast</name>
    <name type="synonym">Pichia stipitis</name>
    <dbReference type="NCBI Taxonomy" id="322104"/>
    <lineage>
        <taxon>Eukaryota</taxon>
        <taxon>Fungi</taxon>
        <taxon>Dikarya</taxon>
        <taxon>Ascomycota</taxon>
        <taxon>Saccharomycotina</taxon>
        <taxon>Pichiomycetes</taxon>
        <taxon>Debaryomycetaceae</taxon>
        <taxon>Scheffersomyces</taxon>
    </lineage>
</organism>
<protein>
    <recommendedName>
        <fullName>Histone H2A.Z</fullName>
    </recommendedName>
</protein>
<reference key="1">
    <citation type="journal article" date="2007" name="Nat. Biotechnol.">
        <title>Genome sequence of the lignocellulose-bioconverting and xylose-fermenting yeast Pichia stipitis.</title>
        <authorList>
            <person name="Jeffries T.W."/>
            <person name="Grigoriev I.V."/>
            <person name="Grimwood J."/>
            <person name="Laplaza J.M."/>
            <person name="Aerts A."/>
            <person name="Salamov A."/>
            <person name="Schmutz J."/>
            <person name="Lindquist E."/>
            <person name="Dehal P."/>
            <person name="Shapiro H."/>
            <person name="Jin Y.-S."/>
            <person name="Passoth V."/>
            <person name="Richardson P.M."/>
        </authorList>
    </citation>
    <scope>NUCLEOTIDE SEQUENCE [LARGE SCALE GENOMIC DNA]</scope>
    <source>
        <strain>ATCC 58785 / CBS 6054 / NBRC 10063 / NRRL Y-11545</strain>
    </source>
</reference>